<keyword id="KW-0046">Antibiotic resistance</keyword>
<organism>
    <name type="scientific">Staphylococcus aureus (strain Mu50 / ATCC 700699)</name>
    <dbReference type="NCBI Taxonomy" id="158878"/>
    <lineage>
        <taxon>Bacteria</taxon>
        <taxon>Bacillati</taxon>
        <taxon>Bacillota</taxon>
        <taxon>Bacilli</taxon>
        <taxon>Bacillales</taxon>
        <taxon>Staphylococcaceae</taxon>
        <taxon>Staphylococcus</taxon>
    </lineage>
</organism>
<gene>
    <name type="primary">ble</name>
    <name type="synonym">bleO</name>
    <name type="ordered locus">SAV0034</name>
</gene>
<protein>
    <recommendedName>
        <fullName>Bleomycin resistance protein</fullName>
        <shortName>BRP</shortName>
    </recommendedName>
    <alternativeName>
        <fullName>Bleomycin-binding protein</fullName>
    </alternativeName>
</protein>
<proteinExistence type="inferred from homology"/>
<reference key="1">
    <citation type="journal article" date="2001" name="Lancet">
        <title>Whole genome sequencing of meticillin-resistant Staphylococcus aureus.</title>
        <authorList>
            <person name="Kuroda M."/>
            <person name="Ohta T."/>
            <person name="Uchiyama I."/>
            <person name="Baba T."/>
            <person name="Yuzawa H."/>
            <person name="Kobayashi I."/>
            <person name="Cui L."/>
            <person name="Oguchi A."/>
            <person name="Aoki K."/>
            <person name="Nagai Y."/>
            <person name="Lian J.-Q."/>
            <person name="Ito T."/>
            <person name="Kanamori M."/>
            <person name="Matsumaru H."/>
            <person name="Maruyama A."/>
            <person name="Murakami H."/>
            <person name="Hosoyama A."/>
            <person name="Mizutani-Ui Y."/>
            <person name="Takahashi N.K."/>
            <person name="Sawano T."/>
            <person name="Inoue R."/>
            <person name="Kaito C."/>
            <person name="Sekimizu K."/>
            <person name="Hirakawa H."/>
            <person name="Kuhara S."/>
            <person name="Goto S."/>
            <person name="Yabuzaki J."/>
            <person name="Kanehisa M."/>
            <person name="Yamashita A."/>
            <person name="Oshima K."/>
            <person name="Furuya K."/>
            <person name="Yoshino C."/>
            <person name="Shiba T."/>
            <person name="Hattori M."/>
            <person name="Ogasawara N."/>
            <person name="Hayashi H."/>
            <person name="Hiramatsu K."/>
        </authorList>
    </citation>
    <scope>NUCLEOTIDE SEQUENCE [LARGE SCALE GENOMIC DNA]</scope>
    <source>
        <strain>Mu50 / ATCC 700699</strain>
    </source>
</reference>
<accession>Q99XE5</accession>
<feature type="chain" id="PRO_0000300634" description="Bleomycin resistance protein">
    <location>
        <begin position="1"/>
        <end position="132"/>
    </location>
</feature>
<feature type="domain" description="VOC" evidence="2">
    <location>
        <begin position="1"/>
        <end position="129"/>
    </location>
</feature>
<name>BLE_STAAM</name>
<evidence type="ECO:0000250" key="1"/>
<evidence type="ECO:0000255" key="2">
    <source>
        <dbReference type="PROSITE-ProRule" id="PRU01163"/>
    </source>
</evidence>
<evidence type="ECO:0000305" key="3"/>
<sequence length="132" mass="14922">MLQSIPALPVGDIKKSIGFYCDKLGFTLVHHEDGFAVLMCNEVRIHLWEASDEGWRSRSNDSPVCTGAESFIAGTASCRIEVEGIDELYQHIKPLGILHPNTSLKDQWWDERDFAVIDPDNNLISFFQQIKS</sequence>
<dbReference type="EMBL" id="BA000017">
    <property type="protein sequence ID" value="BAB56196.1"/>
    <property type="status" value="ALT_INIT"/>
    <property type="molecule type" value="Genomic_DNA"/>
</dbReference>
<dbReference type="SMR" id="Q99XE5"/>
<dbReference type="KEGG" id="sav:SAV0034"/>
<dbReference type="HOGENOM" id="CLU_046006_15_5_9"/>
<dbReference type="Proteomes" id="UP000002481">
    <property type="component" value="Chromosome"/>
</dbReference>
<dbReference type="GO" id="GO:0046677">
    <property type="term" value="P:response to antibiotic"/>
    <property type="evidence" value="ECO:0007669"/>
    <property type="project" value="UniProtKB-KW"/>
</dbReference>
<dbReference type="CDD" id="cd08349">
    <property type="entry name" value="BLMA_like"/>
    <property type="match status" value="1"/>
</dbReference>
<dbReference type="Gene3D" id="3.10.180.10">
    <property type="entry name" value="2,3-Dihydroxybiphenyl 1,2-Dioxygenase, domain 1"/>
    <property type="match status" value="1"/>
</dbReference>
<dbReference type="InterPro" id="IPR000335">
    <property type="entry name" value="Bleomycin-R"/>
</dbReference>
<dbReference type="InterPro" id="IPR029068">
    <property type="entry name" value="Glyas_Bleomycin-R_OHBP_Dase"/>
</dbReference>
<dbReference type="InterPro" id="IPR004360">
    <property type="entry name" value="Glyas_Fos-R_dOase_dom"/>
</dbReference>
<dbReference type="InterPro" id="IPR037523">
    <property type="entry name" value="VOC"/>
</dbReference>
<dbReference type="NCBIfam" id="NF000027">
    <property type="entry name" value="156720500_bleO"/>
    <property type="match status" value="1"/>
</dbReference>
<dbReference type="Pfam" id="PF00903">
    <property type="entry name" value="Glyoxalase"/>
    <property type="match status" value="1"/>
</dbReference>
<dbReference type="PRINTS" id="PR00311">
    <property type="entry name" value="BLEOMYCINRST"/>
</dbReference>
<dbReference type="SUPFAM" id="SSF54593">
    <property type="entry name" value="Glyoxalase/Bleomycin resistance protein/Dihydroxybiphenyl dioxygenase"/>
    <property type="match status" value="1"/>
</dbReference>
<dbReference type="PROSITE" id="PS51819">
    <property type="entry name" value="VOC"/>
    <property type="match status" value="1"/>
</dbReference>
<comment type="function">
    <text evidence="1">Binding protein with a strong affinity to the bleomycin family of antibiotics, which confers resistance to these antibiotics by preventing the bleomycin-induced DNA breakage.</text>
</comment>
<comment type="similarity">
    <text evidence="3">Belongs to the bleomycin resistance protein family.</text>
</comment>
<comment type="sequence caution" evidence="3">
    <conflict type="erroneous initiation">
        <sequence resource="EMBL-CDS" id="BAB56196"/>
    </conflict>
</comment>